<keyword id="KW-0396">Initiation factor</keyword>
<keyword id="KW-0648">Protein biosynthesis</keyword>
<keyword id="KW-1185">Reference proteome</keyword>
<organism>
    <name type="scientific">Methanocorpusculum labreanum (strain ATCC 43576 / DSM 4855 / Z)</name>
    <dbReference type="NCBI Taxonomy" id="410358"/>
    <lineage>
        <taxon>Archaea</taxon>
        <taxon>Methanobacteriati</taxon>
        <taxon>Methanobacteriota</taxon>
        <taxon>Stenosarchaea group</taxon>
        <taxon>Methanomicrobia</taxon>
        <taxon>Methanomicrobiales</taxon>
        <taxon>Methanocorpusculaceae</taxon>
        <taxon>Methanocorpusculum</taxon>
    </lineage>
</organism>
<gene>
    <name evidence="1" type="primary">eif6</name>
    <name type="ordered locus">Mlab_1478</name>
</gene>
<protein>
    <recommendedName>
        <fullName evidence="1">Translation initiation factor 6</fullName>
        <shortName evidence="1">aIF-6</shortName>
    </recommendedName>
</protein>
<comment type="function">
    <text evidence="1">Binds to the 50S ribosomal subunit and prevents its association with the 30S ribosomal subunit to form the 70S initiation complex.</text>
</comment>
<comment type="similarity">
    <text evidence="1">Belongs to the eIF-6 family.</text>
</comment>
<accession>A2STI7</accession>
<sequence length="222" mass="23440">MDPTLSLNGDPNIGVYARVFEDLAVVPVEAPKEFRDKIAEALDVEVIETFVQGSSVIGLLLTGNSRGFVVSGLIQDSELEILQEYGDCLLLGEEMNAAGNVILTNDSFAVVHPDMSSAMREMVADFLKVKIIPMSFAGVGTVGMTCACTNTGVLLPARSTPEEIEKLERSIDDANVAIGTGSVNMGSGLIGTGLLINSKGYLAGNATTGYELGRIEDVFGFL</sequence>
<evidence type="ECO:0000255" key="1">
    <source>
        <dbReference type="HAMAP-Rule" id="MF_00032"/>
    </source>
</evidence>
<dbReference type="EMBL" id="CP000559">
    <property type="protein sequence ID" value="ABN07643.1"/>
    <property type="molecule type" value="Genomic_DNA"/>
</dbReference>
<dbReference type="RefSeq" id="WP_011833846.1">
    <property type="nucleotide sequence ID" value="NC_008942.1"/>
</dbReference>
<dbReference type="SMR" id="A2STI7"/>
<dbReference type="STRING" id="410358.Mlab_1478"/>
<dbReference type="GeneID" id="4795544"/>
<dbReference type="KEGG" id="mla:Mlab_1478"/>
<dbReference type="eggNOG" id="arCOG04176">
    <property type="taxonomic scope" value="Archaea"/>
</dbReference>
<dbReference type="HOGENOM" id="CLU_071894_1_0_2"/>
<dbReference type="OrthoDB" id="33582at2157"/>
<dbReference type="Proteomes" id="UP000000365">
    <property type="component" value="Chromosome"/>
</dbReference>
<dbReference type="GO" id="GO:0043022">
    <property type="term" value="F:ribosome binding"/>
    <property type="evidence" value="ECO:0007669"/>
    <property type="project" value="InterPro"/>
</dbReference>
<dbReference type="GO" id="GO:0003743">
    <property type="term" value="F:translation initiation factor activity"/>
    <property type="evidence" value="ECO:0007669"/>
    <property type="project" value="UniProtKB-UniRule"/>
</dbReference>
<dbReference type="GO" id="GO:0042256">
    <property type="term" value="P:cytosolic ribosome assembly"/>
    <property type="evidence" value="ECO:0007669"/>
    <property type="project" value="InterPro"/>
</dbReference>
<dbReference type="Gene3D" id="3.75.10.10">
    <property type="entry name" value="L-arginine/glycine Amidinotransferase, Chain A"/>
    <property type="match status" value="1"/>
</dbReference>
<dbReference type="HAMAP" id="MF_00032">
    <property type="entry name" value="eIF_6"/>
    <property type="match status" value="1"/>
</dbReference>
<dbReference type="InterPro" id="IPR002769">
    <property type="entry name" value="eIF6"/>
</dbReference>
<dbReference type="NCBIfam" id="TIGR00323">
    <property type="entry name" value="eIF-6"/>
    <property type="match status" value="1"/>
</dbReference>
<dbReference type="NCBIfam" id="NF003132">
    <property type="entry name" value="PRK04046.2-4"/>
    <property type="match status" value="1"/>
</dbReference>
<dbReference type="PANTHER" id="PTHR10784">
    <property type="entry name" value="TRANSLATION INITIATION FACTOR 6"/>
    <property type="match status" value="1"/>
</dbReference>
<dbReference type="Pfam" id="PF01912">
    <property type="entry name" value="eIF-6"/>
    <property type="match status" value="1"/>
</dbReference>
<dbReference type="SMART" id="SM00654">
    <property type="entry name" value="eIF6"/>
    <property type="match status" value="1"/>
</dbReference>
<dbReference type="SUPFAM" id="SSF55909">
    <property type="entry name" value="Pentein"/>
    <property type="match status" value="1"/>
</dbReference>
<proteinExistence type="inferred from homology"/>
<feature type="chain" id="PRO_1000002598" description="Translation initiation factor 6">
    <location>
        <begin position="1"/>
        <end position="222"/>
    </location>
</feature>
<name>IF6_METLZ</name>
<reference key="1">
    <citation type="journal article" date="2009" name="Stand. Genomic Sci.">
        <title>Complete genome sequence of Methanocorpusculum labreanum type strain Z.</title>
        <authorList>
            <person name="Anderson I.J."/>
            <person name="Sieprawska-Lupa M."/>
            <person name="Goltsman E."/>
            <person name="Lapidus A."/>
            <person name="Copeland A."/>
            <person name="Glavina Del Rio T."/>
            <person name="Tice H."/>
            <person name="Dalin E."/>
            <person name="Barry K."/>
            <person name="Pitluck S."/>
            <person name="Hauser L."/>
            <person name="Land M."/>
            <person name="Lucas S."/>
            <person name="Richardson P."/>
            <person name="Whitman W.B."/>
            <person name="Kyrpides N.C."/>
        </authorList>
    </citation>
    <scope>NUCLEOTIDE SEQUENCE [LARGE SCALE GENOMIC DNA]</scope>
    <source>
        <strain>ATCC 43576 / DSM 4855 / Z</strain>
    </source>
</reference>